<accession>C0SP93</accession>
<accession>O34571</accession>
<accession>Q795V4</accession>
<evidence type="ECO:0000255" key="1">
    <source>
        <dbReference type="HAMAP-Rule" id="MF_01395"/>
    </source>
</evidence>
<evidence type="ECO:0000255" key="2">
    <source>
        <dbReference type="PROSITE-ProRule" id="PRU01136"/>
    </source>
</evidence>
<evidence type="ECO:0000305" key="3"/>
<keyword id="KW-0067">ATP-binding</keyword>
<keyword id="KW-0963">Cytoplasm</keyword>
<keyword id="KW-0275">Fatty acid biosynthesis</keyword>
<keyword id="KW-0276">Fatty acid metabolism</keyword>
<keyword id="KW-0444">Lipid biosynthesis</keyword>
<keyword id="KW-0443">Lipid metabolism</keyword>
<keyword id="KW-0479">Metal-binding</keyword>
<keyword id="KW-0547">Nucleotide-binding</keyword>
<keyword id="KW-1185">Reference proteome</keyword>
<keyword id="KW-0808">Transferase</keyword>
<keyword id="KW-0862">Zinc</keyword>
<keyword id="KW-0863">Zinc-finger</keyword>
<protein>
    <recommendedName>
        <fullName evidence="1">Acetyl-coenzyme A carboxylase carboxyl transferase subunit beta</fullName>
        <shortName evidence="1">ACCase subunit beta</shortName>
        <shortName evidence="1">Acetyl-CoA carboxylase carboxyltransferase subunit beta</shortName>
        <ecNumber evidence="1">2.1.3.15</ecNumber>
    </recommendedName>
</protein>
<comment type="function">
    <text evidence="1">Component of the acetyl coenzyme A carboxylase (ACC) complex. Biotin carboxylase (BC) catalyzes the carboxylation of biotin on its carrier protein (BCCP) and then the CO(2) group is transferred by the transcarboxylase to acetyl-CoA to form malonyl-CoA.</text>
</comment>
<comment type="catalytic activity">
    <reaction evidence="1">
        <text>N(6)-carboxybiotinyl-L-lysyl-[protein] + acetyl-CoA = N(6)-biotinyl-L-lysyl-[protein] + malonyl-CoA</text>
        <dbReference type="Rhea" id="RHEA:54728"/>
        <dbReference type="Rhea" id="RHEA-COMP:10505"/>
        <dbReference type="Rhea" id="RHEA-COMP:10506"/>
        <dbReference type="ChEBI" id="CHEBI:57288"/>
        <dbReference type="ChEBI" id="CHEBI:57384"/>
        <dbReference type="ChEBI" id="CHEBI:83144"/>
        <dbReference type="ChEBI" id="CHEBI:83145"/>
        <dbReference type="EC" id="2.1.3.15"/>
    </reaction>
</comment>
<comment type="cofactor">
    <cofactor evidence="1">
        <name>Zn(2+)</name>
        <dbReference type="ChEBI" id="CHEBI:29105"/>
    </cofactor>
    <text evidence="1">Binds 1 zinc ion per subunit.</text>
</comment>
<comment type="activity regulation">
    <text>Inhibited by pyrrolidine dione antibiotics moiramide B (CPD1) and CPD2.</text>
</comment>
<comment type="pathway">
    <text evidence="1">Lipid metabolism; malonyl-CoA biosynthesis; malonyl-CoA from acetyl-CoA: step 1/1.</text>
</comment>
<comment type="subunit">
    <text evidence="1">Acetyl-CoA carboxylase is a heterohexamer composed of biotin carboxyl carrier protein (AccB), biotin carboxylase (AccC) and two subunits each of ACCase subunit alpha (AccA) and ACCase subunit beta (AccD).</text>
</comment>
<comment type="subcellular location">
    <subcellularLocation>
        <location evidence="3">Cytoplasm</location>
    </subcellularLocation>
</comment>
<comment type="similarity">
    <text evidence="1">Belongs to the AccD/PCCB family.</text>
</comment>
<comment type="sequence caution" evidence="3">
    <conflict type="erroneous initiation">
        <sequence resource="EMBL-CDS" id="AAC00340"/>
    </conflict>
    <text>Truncated N-terminus.</text>
</comment>
<gene>
    <name evidence="1" type="primary">accD</name>
    <name type="synonym">yttI</name>
    <name type="ordered locus">BSU29210</name>
</gene>
<proteinExistence type="evidence at protein level"/>
<feature type="chain" id="PRO_0000389686" description="Acetyl-coenzyme A carboxylase carboxyl transferase subunit beta">
    <location>
        <begin position="1"/>
        <end position="290"/>
    </location>
</feature>
<feature type="domain" description="CoA carboxyltransferase N-terminal" evidence="2">
    <location>
        <begin position="28"/>
        <end position="290"/>
    </location>
</feature>
<feature type="zinc finger region" description="C4-type" evidence="1">
    <location>
        <begin position="32"/>
        <end position="54"/>
    </location>
</feature>
<feature type="binding site" evidence="1">
    <location>
        <position position="32"/>
    </location>
    <ligand>
        <name>Zn(2+)</name>
        <dbReference type="ChEBI" id="CHEBI:29105"/>
    </ligand>
</feature>
<feature type="binding site" evidence="1">
    <location>
        <position position="35"/>
    </location>
    <ligand>
        <name>Zn(2+)</name>
        <dbReference type="ChEBI" id="CHEBI:29105"/>
    </ligand>
</feature>
<feature type="binding site" evidence="1">
    <location>
        <position position="51"/>
    </location>
    <ligand>
        <name>Zn(2+)</name>
        <dbReference type="ChEBI" id="CHEBI:29105"/>
    </ligand>
</feature>
<feature type="binding site" evidence="1">
    <location>
        <position position="54"/>
    </location>
    <ligand>
        <name>Zn(2+)</name>
        <dbReference type="ChEBI" id="CHEBI:29105"/>
    </ligand>
</feature>
<sequence length="290" mass="32035">MLKDIFTKKKKYASVPSDQAKHDVPEGIMTKCPKCKKIMLTKELDKNMRVCMNCDYHFPMNAKQRIESLMDEQSFEEFNQGMLSENPLGFPGYLEKLEKDREKTSLNEAVVTGKGTIGGHPAVVAVMDSSFRMGSMGSVVGEKITLAIEKAKADKVPFIIFTASGGARMQEGVLSLMQMAKTSSALKLFSEEQGLIISVMTHPTTGGVSASFASLGDYNFAEPGALIGFAGRRIIEQTIGEKLPEDFQTAEFLLKHGQLDAVIHRDDMKKTLENLLDMHQTGGDIEWLQD</sequence>
<organism>
    <name type="scientific">Bacillus subtilis (strain 168)</name>
    <dbReference type="NCBI Taxonomy" id="224308"/>
    <lineage>
        <taxon>Bacteria</taxon>
        <taxon>Bacillati</taxon>
        <taxon>Bacillota</taxon>
        <taxon>Bacilli</taxon>
        <taxon>Bacillales</taxon>
        <taxon>Bacillaceae</taxon>
        <taxon>Bacillus</taxon>
    </lineage>
</organism>
<reference key="1">
    <citation type="journal article" date="1997" name="Microbiology">
        <title>Sequencing and functional annotation of the Bacillus subtilis genes in the 200 kb rrnB-dnaB region.</title>
        <authorList>
            <person name="Lapidus A."/>
            <person name="Galleron N."/>
            <person name="Sorokin A."/>
            <person name="Ehrlich S.D."/>
        </authorList>
    </citation>
    <scope>NUCLEOTIDE SEQUENCE [GENOMIC DNA]</scope>
</reference>
<reference key="2">
    <citation type="journal article" date="1997" name="Nature">
        <title>The complete genome sequence of the Gram-positive bacterium Bacillus subtilis.</title>
        <authorList>
            <person name="Kunst F."/>
            <person name="Ogasawara N."/>
            <person name="Moszer I."/>
            <person name="Albertini A.M."/>
            <person name="Alloni G."/>
            <person name="Azevedo V."/>
            <person name="Bertero M.G."/>
            <person name="Bessieres P."/>
            <person name="Bolotin A."/>
            <person name="Borchert S."/>
            <person name="Borriss R."/>
            <person name="Boursier L."/>
            <person name="Brans A."/>
            <person name="Braun M."/>
            <person name="Brignell S.C."/>
            <person name="Bron S."/>
            <person name="Brouillet S."/>
            <person name="Bruschi C.V."/>
            <person name="Caldwell B."/>
            <person name="Capuano V."/>
            <person name="Carter N.M."/>
            <person name="Choi S.-K."/>
            <person name="Codani J.-J."/>
            <person name="Connerton I.F."/>
            <person name="Cummings N.J."/>
            <person name="Daniel R.A."/>
            <person name="Denizot F."/>
            <person name="Devine K.M."/>
            <person name="Duesterhoeft A."/>
            <person name="Ehrlich S.D."/>
            <person name="Emmerson P.T."/>
            <person name="Entian K.-D."/>
            <person name="Errington J."/>
            <person name="Fabret C."/>
            <person name="Ferrari E."/>
            <person name="Foulger D."/>
            <person name="Fritz C."/>
            <person name="Fujita M."/>
            <person name="Fujita Y."/>
            <person name="Fuma S."/>
            <person name="Galizzi A."/>
            <person name="Galleron N."/>
            <person name="Ghim S.-Y."/>
            <person name="Glaser P."/>
            <person name="Goffeau A."/>
            <person name="Golightly E.J."/>
            <person name="Grandi G."/>
            <person name="Guiseppi G."/>
            <person name="Guy B.J."/>
            <person name="Haga K."/>
            <person name="Haiech J."/>
            <person name="Harwood C.R."/>
            <person name="Henaut A."/>
            <person name="Hilbert H."/>
            <person name="Holsappel S."/>
            <person name="Hosono S."/>
            <person name="Hullo M.-F."/>
            <person name="Itaya M."/>
            <person name="Jones L.-M."/>
            <person name="Joris B."/>
            <person name="Karamata D."/>
            <person name="Kasahara Y."/>
            <person name="Klaerr-Blanchard M."/>
            <person name="Klein C."/>
            <person name="Kobayashi Y."/>
            <person name="Koetter P."/>
            <person name="Koningstein G."/>
            <person name="Krogh S."/>
            <person name="Kumano M."/>
            <person name="Kurita K."/>
            <person name="Lapidus A."/>
            <person name="Lardinois S."/>
            <person name="Lauber J."/>
            <person name="Lazarevic V."/>
            <person name="Lee S.-M."/>
            <person name="Levine A."/>
            <person name="Liu H."/>
            <person name="Masuda S."/>
            <person name="Mauel C."/>
            <person name="Medigue C."/>
            <person name="Medina N."/>
            <person name="Mellado R.P."/>
            <person name="Mizuno M."/>
            <person name="Moestl D."/>
            <person name="Nakai S."/>
            <person name="Noback M."/>
            <person name="Noone D."/>
            <person name="O'Reilly M."/>
            <person name="Ogawa K."/>
            <person name="Ogiwara A."/>
            <person name="Oudega B."/>
            <person name="Park S.-H."/>
            <person name="Parro V."/>
            <person name="Pohl T.M."/>
            <person name="Portetelle D."/>
            <person name="Porwollik S."/>
            <person name="Prescott A.M."/>
            <person name="Presecan E."/>
            <person name="Pujic P."/>
            <person name="Purnelle B."/>
            <person name="Rapoport G."/>
            <person name="Rey M."/>
            <person name="Reynolds S."/>
            <person name="Rieger M."/>
            <person name="Rivolta C."/>
            <person name="Rocha E."/>
            <person name="Roche B."/>
            <person name="Rose M."/>
            <person name="Sadaie Y."/>
            <person name="Sato T."/>
            <person name="Scanlan E."/>
            <person name="Schleich S."/>
            <person name="Schroeter R."/>
            <person name="Scoffone F."/>
            <person name="Sekiguchi J."/>
            <person name="Sekowska A."/>
            <person name="Seror S.J."/>
            <person name="Serror P."/>
            <person name="Shin B.-S."/>
            <person name="Soldo B."/>
            <person name="Sorokin A."/>
            <person name="Tacconi E."/>
            <person name="Takagi T."/>
            <person name="Takahashi H."/>
            <person name="Takemaru K."/>
            <person name="Takeuchi M."/>
            <person name="Tamakoshi A."/>
            <person name="Tanaka T."/>
            <person name="Terpstra P."/>
            <person name="Tognoni A."/>
            <person name="Tosato V."/>
            <person name="Uchiyama S."/>
            <person name="Vandenbol M."/>
            <person name="Vannier F."/>
            <person name="Vassarotti A."/>
            <person name="Viari A."/>
            <person name="Wambutt R."/>
            <person name="Wedler E."/>
            <person name="Wedler H."/>
            <person name="Weitzenegger T."/>
            <person name="Winters P."/>
            <person name="Wipat A."/>
            <person name="Yamamoto H."/>
            <person name="Yamane K."/>
            <person name="Yasumoto K."/>
            <person name="Yata K."/>
            <person name="Yoshida K."/>
            <person name="Yoshikawa H.-F."/>
            <person name="Zumstein E."/>
            <person name="Yoshikawa H."/>
            <person name="Danchin A."/>
        </authorList>
    </citation>
    <scope>NUCLEOTIDE SEQUENCE [LARGE SCALE GENOMIC DNA]</scope>
    <source>
        <strain>168</strain>
    </source>
</reference>
<reference key="3">
    <citation type="journal article" date="2004" name="J. Biol. Chem.">
        <title>Identification and characterization of the first class of potent bacterial acetyl-CoA carboxylase inhibitors with antibacterial activity.</title>
        <authorList>
            <person name="Freiberg C."/>
            <person name="Brunner N.A."/>
            <person name="Schiffer G."/>
            <person name="Lampe T."/>
            <person name="Pohlmann J."/>
            <person name="Brands M."/>
            <person name="Raabe M."/>
            <person name="Haebich D."/>
            <person name="Ziegelbauer K."/>
        </authorList>
    </citation>
    <scope>CHARACTERIZATION OF ACTIVITY REGULATION</scope>
</reference>
<name>ACCD_BACSU</name>
<dbReference type="EC" id="2.1.3.15" evidence="1"/>
<dbReference type="EMBL" id="AF008220">
    <property type="protein sequence ID" value="AAC00340.1"/>
    <property type="status" value="ALT_INIT"/>
    <property type="molecule type" value="Genomic_DNA"/>
</dbReference>
<dbReference type="EMBL" id="AL009126">
    <property type="protein sequence ID" value="CAB14881.2"/>
    <property type="molecule type" value="Genomic_DNA"/>
</dbReference>
<dbReference type="PIR" id="G70001">
    <property type="entry name" value="G70001"/>
</dbReference>
<dbReference type="RefSeq" id="NP_390799.2">
    <property type="nucleotide sequence ID" value="NC_000964.3"/>
</dbReference>
<dbReference type="RefSeq" id="WP_003223544.1">
    <property type="nucleotide sequence ID" value="NZ_OZ025638.1"/>
</dbReference>
<dbReference type="SMR" id="C0SP93"/>
<dbReference type="FunCoup" id="C0SP93">
    <property type="interactions" value="340"/>
</dbReference>
<dbReference type="STRING" id="224308.BSU29210"/>
<dbReference type="jPOST" id="C0SP93"/>
<dbReference type="PaxDb" id="224308-BSU29210"/>
<dbReference type="EnsemblBacteria" id="CAB14881">
    <property type="protein sequence ID" value="CAB14881"/>
    <property type="gene ID" value="BSU_29210"/>
</dbReference>
<dbReference type="GeneID" id="936186"/>
<dbReference type="KEGG" id="bsu:BSU29210"/>
<dbReference type="PATRIC" id="fig|224308.179.peg.3172"/>
<dbReference type="eggNOG" id="COG0777">
    <property type="taxonomic scope" value="Bacteria"/>
</dbReference>
<dbReference type="InParanoid" id="C0SP93"/>
<dbReference type="OrthoDB" id="9772975at2"/>
<dbReference type="PhylomeDB" id="C0SP93"/>
<dbReference type="BioCyc" id="BSUB:BSU29210-MONOMER"/>
<dbReference type="UniPathway" id="UPA00655">
    <property type="reaction ID" value="UER00711"/>
</dbReference>
<dbReference type="Proteomes" id="UP000001570">
    <property type="component" value="Chromosome"/>
</dbReference>
<dbReference type="GO" id="GO:0009317">
    <property type="term" value="C:acetyl-CoA carboxylase complex"/>
    <property type="evidence" value="ECO:0007669"/>
    <property type="project" value="InterPro"/>
</dbReference>
<dbReference type="GO" id="GO:0003989">
    <property type="term" value="F:acetyl-CoA carboxylase activity"/>
    <property type="evidence" value="ECO:0007669"/>
    <property type="project" value="InterPro"/>
</dbReference>
<dbReference type="GO" id="GO:0005524">
    <property type="term" value="F:ATP binding"/>
    <property type="evidence" value="ECO:0007669"/>
    <property type="project" value="UniProtKB-KW"/>
</dbReference>
<dbReference type="GO" id="GO:0016743">
    <property type="term" value="F:carboxyl- or carbamoyltransferase activity"/>
    <property type="evidence" value="ECO:0007669"/>
    <property type="project" value="UniProtKB-UniRule"/>
</dbReference>
<dbReference type="GO" id="GO:0008270">
    <property type="term" value="F:zinc ion binding"/>
    <property type="evidence" value="ECO:0007669"/>
    <property type="project" value="UniProtKB-UniRule"/>
</dbReference>
<dbReference type="GO" id="GO:2001295">
    <property type="term" value="P:malonyl-CoA biosynthetic process"/>
    <property type="evidence" value="ECO:0007669"/>
    <property type="project" value="UniProtKB-UniRule"/>
</dbReference>
<dbReference type="GO" id="GO:0071768">
    <property type="term" value="P:mycolic acid biosynthetic process"/>
    <property type="evidence" value="ECO:0000318"/>
    <property type="project" value="GO_Central"/>
</dbReference>
<dbReference type="Gene3D" id="3.90.226.10">
    <property type="entry name" value="2-enoyl-CoA Hydratase, Chain A, domain 1"/>
    <property type="match status" value="1"/>
</dbReference>
<dbReference type="HAMAP" id="MF_01395">
    <property type="entry name" value="AcetylCoA_CT_beta"/>
    <property type="match status" value="1"/>
</dbReference>
<dbReference type="InterPro" id="IPR034733">
    <property type="entry name" value="AcCoA_carboxyl_beta"/>
</dbReference>
<dbReference type="InterPro" id="IPR000438">
    <property type="entry name" value="Acetyl_CoA_COase_Trfase_b_su"/>
</dbReference>
<dbReference type="InterPro" id="IPR029045">
    <property type="entry name" value="ClpP/crotonase-like_dom_sf"/>
</dbReference>
<dbReference type="InterPro" id="IPR011762">
    <property type="entry name" value="COA_CT_N"/>
</dbReference>
<dbReference type="InterPro" id="IPR041010">
    <property type="entry name" value="Znf-ACC"/>
</dbReference>
<dbReference type="NCBIfam" id="TIGR00515">
    <property type="entry name" value="accD"/>
    <property type="match status" value="1"/>
</dbReference>
<dbReference type="PANTHER" id="PTHR42995">
    <property type="entry name" value="ACETYL-COENZYME A CARBOXYLASE CARBOXYL TRANSFERASE SUBUNIT BETA, CHLOROPLASTIC"/>
    <property type="match status" value="1"/>
</dbReference>
<dbReference type="PANTHER" id="PTHR42995:SF5">
    <property type="entry name" value="ACETYL-COENZYME A CARBOXYLASE CARBOXYL TRANSFERASE SUBUNIT BETA, CHLOROPLASTIC"/>
    <property type="match status" value="1"/>
</dbReference>
<dbReference type="Pfam" id="PF01039">
    <property type="entry name" value="Carboxyl_trans"/>
    <property type="match status" value="1"/>
</dbReference>
<dbReference type="Pfam" id="PF17848">
    <property type="entry name" value="Zn_ribbon_ACC"/>
    <property type="match status" value="1"/>
</dbReference>
<dbReference type="PRINTS" id="PR01070">
    <property type="entry name" value="ACCCTRFRASEB"/>
</dbReference>
<dbReference type="SUPFAM" id="SSF52096">
    <property type="entry name" value="ClpP/crotonase"/>
    <property type="match status" value="1"/>
</dbReference>
<dbReference type="PROSITE" id="PS50980">
    <property type="entry name" value="COA_CT_NTER"/>
    <property type="match status" value="1"/>
</dbReference>